<feature type="chain" id="PRO_0000414073" description="WEB family protein At3g51720">
    <location>
        <begin position="1"/>
        <end position="407"/>
    </location>
</feature>
<feature type="coiled-coil region" evidence="1">
    <location>
        <begin position="72"/>
        <end position="99"/>
    </location>
</feature>
<feature type="coiled-coil region" evidence="1">
    <location>
        <begin position="128"/>
        <end position="217"/>
    </location>
</feature>
<feature type="coiled-coil region" evidence="1">
    <location>
        <begin position="247"/>
        <end position="278"/>
    </location>
</feature>
<feature type="sequence conflict" description="In Ref. 4; AAM67231." evidence="2" ref="4">
    <original>R</original>
    <variation>H</variation>
    <location>
        <position position="28"/>
    </location>
</feature>
<feature type="sequence conflict" description="In Ref. 4; AAM67231." evidence="2" ref="4">
    <original>R</original>
    <variation>I</variation>
    <location>
        <position position="289"/>
    </location>
</feature>
<dbReference type="EMBL" id="AL132968">
    <property type="protein sequence ID" value="CAB63158.1"/>
    <property type="molecule type" value="Genomic_DNA"/>
</dbReference>
<dbReference type="EMBL" id="CP002686">
    <property type="protein sequence ID" value="AEE78830.1"/>
    <property type="molecule type" value="Genomic_DNA"/>
</dbReference>
<dbReference type="EMBL" id="AY069905">
    <property type="protein sequence ID" value="AAL47456.1"/>
    <property type="molecule type" value="mRNA"/>
</dbReference>
<dbReference type="EMBL" id="AY113026">
    <property type="protein sequence ID" value="AAM47334.1"/>
    <property type="molecule type" value="mRNA"/>
</dbReference>
<dbReference type="EMBL" id="AY088925">
    <property type="protein sequence ID" value="AAM67231.1"/>
    <property type="molecule type" value="mRNA"/>
</dbReference>
<dbReference type="PIR" id="T46068">
    <property type="entry name" value="T46068"/>
</dbReference>
<dbReference type="RefSeq" id="NP_190740.1">
    <property type="nucleotide sequence ID" value="NM_115031.2"/>
</dbReference>
<dbReference type="SMR" id="Q9SCT6"/>
<dbReference type="FunCoup" id="Q9SCT6">
    <property type="interactions" value="307"/>
</dbReference>
<dbReference type="STRING" id="3702.Q9SCT6"/>
<dbReference type="PaxDb" id="3702-AT3G51720.1"/>
<dbReference type="EnsemblPlants" id="AT3G51720.1">
    <property type="protein sequence ID" value="AT3G51720.1"/>
    <property type="gene ID" value="AT3G51720"/>
</dbReference>
<dbReference type="GeneID" id="824335"/>
<dbReference type="Gramene" id="AT3G51720.1">
    <property type="protein sequence ID" value="AT3G51720.1"/>
    <property type="gene ID" value="AT3G51720"/>
</dbReference>
<dbReference type="KEGG" id="ath:AT3G51720"/>
<dbReference type="Araport" id="AT3G51720"/>
<dbReference type="TAIR" id="AT3G51720"/>
<dbReference type="eggNOG" id="ENOG502QSAB">
    <property type="taxonomic scope" value="Eukaryota"/>
</dbReference>
<dbReference type="HOGENOM" id="CLU_017338_2_0_1"/>
<dbReference type="InParanoid" id="Q9SCT6"/>
<dbReference type="OMA" id="HFKKMGE"/>
<dbReference type="OrthoDB" id="649232at2759"/>
<dbReference type="PhylomeDB" id="Q9SCT6"/>
<dbReference type="PRO" id="PR:Q9SCT6"/>
<dbReference type="Proteomes" id="UP000006548">
    <property type="component" value="Chromosome 3"/>
</dbReference>
<dbReference type="ExpressionAtlas" id="Q9SCT6">
    <property type="expression patterns" value="baseline and differential"/>
</dbReference>
<dbReference type="InterPro" id="IPR008545">
    <property type="entry name" value="Web"/>
</dbReference>
<dbReference type="PANTHER" id="PTHR32054">
    <property type="entry name" value="HEAVY CHAIN, PUTATIVE, EXPRESSED-RELATED-RELATED"/>
    <property type="match status" value="1"/>
</dbReference>
<dbReference type="PANTHER" id="PTHR32054:SF27">
    <property type="entry name" value="WEB FAMILY PROTEIN"/>
    <property type="match status" value="1"/>
</dbReference>
<dbReference type="Pfam" id="PF05701">
    <property type="entry name" value="WEMBL"/>
    <property type="match status" value="1"/>
</dbReference>
<comment type="similarity">
    <text evidence="2">Belongs to the WEB family.</text>
</comment>
<proteinExistence type="evidence at transcript level"/>
<evidence type="ECO:0000255" key="1"/>
<evidence type="ECO:0000305" key="2"/>
<accession>Q9SCT6</accession>
<accession>Q8L8L2</accession>
<gene>
    <name type="ordered locus">At3g51720</name>
    <name type="ORF">T18N14.100</name>
</gene>
<name>Y3172_ARATH</name>
<sequence>MAETLEPSLVGEIDTSAPFESVREAATRFGGFGFWKPSSLNISEASQNEVGMVLKASELEKELIEKEGETLKVLKSLESTKAIVEELKSKIQNKEDKENCDMNVFKELNQAKMNLCKTTKDLAAIRVSVGLLNKRLEEERAALEKTRERLNSENAAEMSMEIQRLSYEAKEFSRTGENVRYAVNKAVAEIEQTRNKIEAAEMRLIAARKMKEAARAAEAVAIAEIKAVTRRGRRRRRGGNGEETMQEEILETIDETAREIRSSRRTLEEGLAKMEAEEGNWWWTEQRRRSSCSAKFKNPPYMMDVKGLNMMMNGDGTSSSVAVLKPTMSIGQILSRKLLLADESAMMMNGRVSLGQILGKTNFGDREKEKRFNGKRKRFGFANLSVMLNKESKKKNKKKKIALNLSC</sequence>
<reference key="1">
    <citation type="journal article" date="2000" name="Nature">
        <title>Sequence and analysis of chromosome 3 of the plant Arabidopsis thaliana.</title>
        <authorList>
            <person name="Salanoubat M."/>
            <person name="Lemcke K."/>
            <person name="Rieger M."/>
            <person name="Ansorge W."/>
            <person name="Unseld M."/>
            <person name="Fartmann B."/>
            <person name="Valle G."/>
            <person name="Bloecker H."/>
            <person name="Perez-Alonso M."/>
            <person name="Obermaier B."/>
            <person name="Delseny M."/>
            <person name="Boutry M."/>
            <person name="Grivell L.A."/>
            <person name="Mache R."/>
            <person name="Puigdomenech P."/>
            <person name="De Simone V."/>
            <person name="Choisne N."/>
            <person name="Artiguenave F."/>
            <person name="Robert C."/>
            <person name="Brottier P."/>
            <person name="Wincker P."/>
            <person name="Cattolico L."/>
            <person name="Weissenbach J."/>
            <person name="Saurin W."/>
            <person name="Quetier F."/>
            <person name="Schaefer M."/>
            <person name="Mueller-Auer S."/>
            <person name="Gabel C."/>
            <person name="Fuchs M."/>
            <person name="Benes V."/>
            <person name="Wurmbach E."/>
            <person name="Drzonek H."/>
            <person name="Erfle H."/>
            <person name="Jordan N."/>
            <person name="Bangert S."/>
            <person name="Wiedelmann R."/>
            <person name="Kranz H."/>
            <person name="Voss H."/>
            <person name="Holland R."/>
            <person name="Brandt P."/>
            <person name="Nyakatura G."/>
            <person name="Vezzi A."/>
            <person name="D'Angelo M."/>
            <person name="Pallavicini A."/>
            <person name="Toppo S."/>
            <person name="Simionati B."/>
            <person name="Conrad A."/>
            <person name="Hornischer K."/>
            <person name="Kauer G."/>
            <person name="Loehnert T.-H."/>
            <person name="Nordsiek G."/>
            <person name="Reichelt J."/>
            <person name="Scharfe M."/>
            <person name="Schoen O."/>
            <person name="Bargues M."/>
            <person name="Terol J."/>
            <person name="Climent J."/>
            <person name="Navarro P."/>
            <person name="Collado C."/>
            <person name="Perez-Perez A."/>
            <person name="Ottenwaelder B."/>
            <person name="Duchemin D."/>
            <person name="Cooke R."/>
            <person name="Laudie M."/>
            <person name="Berger-Llauro C."/>
            <person name="Purnelle B."/>
            <person name="Masuy D."/>
            <person name="de Haan M."/>
            <person name="Maarse A.C."/>
            <person name="Alcaraz J.-P."/>
            <person name="Cottet A."/>
            <person name="Casacuberta E."/>
            <person name="Monfort A."/>
            <person name="Argiriou A."/>
            <person name="Flores M."/>
            <person name="Liguori R."/>
            <person name="Vitale D."/>
            <person name="Mannhaupt G."/>
            <person name="Haase D."/>
            <person name="Schoof H."/>
            <person name="Rudd S."/>
            <person name="Zaccaria P."/>
            <person name="Mewes H.-W."/>
            <person name="Mayer K.F.X."/>
            <person name="Kaul S."/>
            <person name="Town C.D."/>
            <person name="Koo H.L."/>
            <person name="Tallon L.J."/>
            <person name="Jenkins J."/>
            <person name="Rooney T."/>
            <person name="Rizzo M."/>
            <person name="Walts A."/>
            <person name="Utterback T."/>
            <person name="Fujii C.Y."/>
            <person name="Shea T.P."/>
            <person name="Creasy T.H."/>
            <person name="Haas B."/>
            <person name="Maiti R."/>
            <person name="Wu D."/>
            <person name="Peterson J."/>
            <person name="Van Aken S."/>
            <person name="Pai G."/>
            <person name="Militscher J."/>
            <person name="Sellers P."/>
            <person name="Gill J.E."/>
            <person name="Feldblyum T.V."/>
            <person name="Preuss D."/>
            <person name="Lin X."/>
            <person name="Nierman W.C."/>
            <person name="Salzberg S.L."/>
            <person name="White O."/>
            <person name="Venter J.C."/>
            <person name="Fraser C.M."/>
            <person name="Kaneko T."/>
            <person name="Nakamura Y."/>
            <person name="Sato S."/>
            <person name="Kato T."/>
            <person name="Asamizu E."/>
            <person name="Sasamoto S."/>
            <person name="Kimura T."/>
            <person name="Idesawa K."/>
            <person name="Kawashima K."/>
            <person name="Kishida Y."/>
            <person name="Kiyokawa C."/>
            <person name="Kohara M."/>
            <person name="Matsumoto M."/>
            <person name="Matsuno A."/>
            <person name="Muraki A."/>
            <person name="Nakayama S."/>
            <person name="Nakazaki N."/>
            <person name="Shinpo S."/>
            <person name="Takeuchi C."/>
            <person name="Wada T."/>
            <person name="Watanabe A."/>
            <person name="Yamada M."/>
            <person name="Yasuda M."/>
            <person name="Tabata S."/>
        </authorList>
    </citation>
    <scope>NUCLEOTIDE SEQUENCE [LARGE SCALE GENOMIC DNA]</scope>
    <source>
        <strain>cv. Columbia</strain>
    </source>
</reference>
<reference key="2">
    <citation type="journal article" date="2017" name="Plant J.">
        <title>Araport11: a complete reannotation of the Arabidopsis thaliana reference genome.</title>
        <authorList>
            <person name="Cheng C.Y."/>
            <person name="Krishnakumar V."/>
            <person name="Chan A.P."/>
            <person name="Thibaud-Nissen F."/>
            <person name="Schobel S."/>
            <person name="Town C.D."/>
        </authorList>
    </citation>
    <scope>GENOME REANNOTATION</scope>
    <source>
        <strain>cv. Columbia</strain>
    </source>
</reference>
<reference key="3">
    <citation type="journal article" date="2003" name="Science">
        <title>Empirical analysis of transcriptional activity in the Arabidopsis genome.</title>
        <authorList>
            <person name="Yamada K."/>
            <person name="Lim J."/>
            <person name="Dale J.M."/>
            <person name="Chen H."/>
            <person name="Shinn P."/>
            <person name="Palm C.J."/>
            <person name="Southwick A.M."/>
            <person name="Wu H.C."/>
            <person name="Kim C.J."/>
            <person name="Nguyen M."/>
            <person name="Pham P.K."/>
            <person name="Cheuk R.F."/>
            <person name="Karlin-Newmann G."/>
            <person name="Liu S.X."/>
            <person name="Lam B."/>
            <person name="Sakano H."/>
            <person name="Wu T."/>
            <person name="Yu G."/>
            <person name="Miranda M."/>
            <person name="Quach H.L."/>
            <person name="Tripp M."/>
            <person name="Chang C.H."/>
            <person name="Lee J.M."/>
            <person name="Toriumi M.J."/>
            <person name="Chan M.M."/>
            <person name="Tang C.C."/>
            <person name="Onodera C.S."/>
            <person name="Deng J.M."/>
            <person name="Akiyama K."/>
            <person name="Ansari Y."/>
            <person name="Arakawa T."/>
            <person name="Banh J."/>
            <person name="Banno F."/>
            <person name="Bowser L."/>
            <person name="Brooks S.Y."/>
            <person name="Carninci P."/>
            <person name="Chao Q."/>
            <person name="Choy N."/>
            <person name="Enju A."/>
            <person name="Goldsmith A.D."/>
            <person name="Gurjal M."/>
            <person name="Hansen N.F."/>
            <person name="Hayashizaki Y."/>
            <person name="Johnson-Hopson C."/>
            <person name="Hsuan V.W."/>
            <person name="Iida K."/>
            <person name="Karnes M."/>
            <person name="Khan S."/>
            <person name="Koesema E."/>
            <person name="Ishida J."/>
            <person name="Jiang P.X."/>
            <person name="Jones T."/>
            <person name="Kawai J."/>
            <person name="Kamiya A."/>
            <person name="Meyers C."/>
            <person name="Nakajima M."/>
            <person name="Narusaka M."/>
            <person name="Seki M."/>
            <person name="Sakurai T."/>
            <person name="Satou M."/>
            <person name="Tamse R."/>
            <person name="Vaysberg M."/>
            <person name="Wallender E.K."/>
            <person name="Wong C."/>
            <person name="Yamamura Y."/>
            <person name="Yuan S."/>
            <person name="Shinozaki K."/>
            <person name="Davis R.W."/>
            <person name="Theologis A."/>
            <person name="Ecker J.R."/>
        </authorList>
    </citation>
    <scope>NUCLEOTIDE SEQUENCE [LARGE SCALE MRNA]</scope>
    <source>
        <strain>cv. Columbia</strain>
    </source>
</reference>
<reference key="4">
    <citation type="submission" date="2002-03" db="EMBL/GenBank/DDBJ databases">
        <title>Full-length cDNA from Arabidopsis thaliana.</title>
        <authorList>
            <person name="Brover V.V."/>
            <person name="Troukhan M.E."/>
            <person name="Alexandrov N.A."/>
            <person name="Lu Y.-P."/>
            <person name="Flavell R.B."/>
            <person name="Feldmann K.A."/>
        </authorList>
    </citation>
    <scope>NUCLEOTIDE SEQUENCE [LARGE SCALE MRNA]</scope>
</reference>
<protein>
    <recommendedName>
        <fullName>WEB family protein At3g51720</fullName>
    </recommendedName>
</protein>
<keyword id="KW-0175">Coiled coil</keyword>
<keyword id="KW-1185">Reference proteome</keyword>
<organism>
    <name type="scientific">Arabidopsis thaliana</name>
    <name type="common">Mouse-ear cress</name>
    <dbReference type="NCBI Taxonomy" id="3702"/>
    <lineage>
        <taxon>Eukaryota</taxon>
        <taxon>Viridiplantae</taxon>
        <taxon>Streptophyta</taxon>
        <taxon>Embryophyta</taxon>
        <taxon>Tracheophyta</taxon>
        <taxon>Spermatophyta</taxon>
        <taxon>Magnoliopsida</taxon>
        <taxon>eudicotyledons</taxon>
        <taxon>Gunneridae</taxon>
        <taxon>Pentapetalae</taxon>
        <taxon>rosids</taxon>
        <taxon>malvids</taxon>
        <taxon>Brassicales</taxon>
        <taxon>Brassicaceae</taxon>
        <taxon>Camelineae</taxon>
        <taxon>Arabidopsis</taxon>
    </lineage>
</organism>